<gene>
    <name type="primary">TM9SF2</name>
</gene>
<dbReference type="EMBL" id="U81006">
    <property type="protein sequence ID" value="AAB38973.1"/>
    <property type="molecule type" value="mRNA"/>
</dbReference>
<dbReference type="EMBL" id="AK290514">
    <property type="protein sequence ID" value="BAF83203.1"/>
    <property type="molecule type" value="mRNA"/>
</dbReference>
<dbReference type="EMBL" id="AL139035">
    <property type="status" value="NOT_ANNOTATED_CDS"/>
    <property type="molecule type" value="Genomic_DNA"/>
</dbReference>
<dbReference type="EMBL" id="BC110656">
    <property type="protein sequence ID" value="AAI10657.1"/>
    <property type="molecule type" value="mRNA"/>
</dbReference>
<dbReference type="EMBL" id="BC130293">
    <property type="protein sequence ID" value="AAI30294.1"/>
    <property type="molecule type" value="mRNA"/>
</dbReference>
<dbReference type="CCDS" id="CCDS9493.1"/>
<dbReference type="RefSeq" id="NP_004791.1">
    <property type="nucleotide sequence ID" value="NM_004800.3"/>
</dbReference>
<dbReference type="SMR" id="Q99805"/>
<dbReference type="BioGRID" id="114776">
    <property type="interactions" value="101"/>
</dbReference>
<dbReference type="FunCoup" id="Q99805">
    <property type="interactions" value="1507"/>
</dbReference>
<dbReference type="IntAct" id="Q99805">
    <property type="interactions" value="49"/>
</dbReference>
<dbReference type="MINT" id="Q99805"/>
<dbReference type="STRING" id="9606.ENSP00000493515"/>
<dbReference type="TCDB" id="8.A.68.1.6">
    <property type="family name" value="the endomembrane protein-70 (emp70) family"/>
</dbReference>
<dbReference type="GlyGen" id="Q99805">
    <property type="glycosylation" value="1 site, 1 O-linked glycan (1 site)"/>
</dbReference>
<dbReference type="iPTMnet" id="Q99805"/>
<dbReference type="PhosphoSitePlus" id="Q99805"/>
<dbReference type="SwissPalm" id="Q99805"/>
<dbReference type="BioMuta" id="TM9SF2"/>
<dbReference type="DMDM" id="13878805"/>
<dbReference type="jPOST" id="Q99805"/>
<dbReference type="MassIVE" id="Q99805"/>
<dbReference type="PaxDb" id="9606-ENSP00000365567"/>
<dbReference type="PeptideAtlas" id="Q99805"/>
<dbReference type="ProteomicsDB" id="78484"/>
<dbReference type="Pumba" id="Q99805"/>
<dbReference type="Antibodypedia" id="970">
    <property type="antibodies" value="76 antibodies from 18 providers"/>
</dbReference>
<dbReference type="DNASU" id="9375"/>
<dbReference type="Ensembl" id="ENST00000376387.5">
    <property type="protein sequence ID" value="ENSP00000365567.3"/>
    <property type="gene ID" value="ENSG00000125304.10"/>
</dbReference>
<dbReference type="Ensembl" id="ENST00000642475.1">
    <property type="protein sequence ID" value="ENSP00000493515.1"/>
    <property type="gene ID" value="ENSG00000125304.10"/>
</dbReference>
<dbReference type="GeneID" id="9375"/>
<dbReference type="KEGG" id="hsa:9375"/>
<dbReference type="MANE-Select" id="ENST00000376387.5">
    <property type="protein sequence ID" value="ENSP00000365567.3"/>
    <property type="RefSeq nucleotide sequence ID" value="NM_004800.3"/>
    <property type="RefSeq protein sequence ID" value="NP_004791.1"/>
</dbReference>
<dbReference type="UCSC" id="uc001voj.3">
    <property type="organism name" value="human"/>
</dbReference>
<dbReference type="AGR" id="HGNC:11865"/>
<dbReference type="CTD" id="9375"/>
<dbReference type="DisGeNET" id="9375"/>
<dbReference type="GeneCards" id="TM9SF2"/>
<dbReference type="HGNC" id="HGNC:11865">
    <property type="gene designation" value="TM9SF2"/>
</dbReference>
<dbReference type="HPA" id="ENSG00000125304">
    <property type="expression patterns" value="Low tissue specificity"/>
</dbReference>
<dbReference type="MIM" id="604678">
    <property type="type" value="gene"/>
</dbReference>
<dbReference type="neXtProt" id="NX_Q99805"/>
<dbReference type="OpenTargets" id="ENSG00000125304"/>
<dbReference type="PharmGKB" id="PA36566"/>
<dbReference type="VEuPathDB" id="HostDB:ENSG00000125304"/>
<dbReference type="eggNOG" id="KOG1278">
    <property type="taxonomic scope" value="Eukaryota"/>
</dbReference>
<dbReference type="GeneTree" id="ENSGT00940000157563"/>
<dbReference type="HOGENOM" id="CLU_010714_4_1_1"/>
<dbReference type="InParanoid" id="Q99805"/>
<dbReference type="OMA" id="KVYYMFG"/>
<dbReference type="OrthoDB" id="1666796at2759"/>
<dbReference type="PAN-GO" id="Q99805">
    <property type="GO annotations" value="2 GO annotations based on evolutionary models"/>
</dbReference>
<dbReference type="PhylomeDB" id="Q99805"/>
<dbReference type="TreeFam" id="TF300394"/>
<dbReference type="PathwayCommons" id="Q99805"/>
<dbReference type="SignaLink" id="Q99805"/>
<dbReference type="BioGRID-ORCS" id="9375">
    <property type="hits" value="78 hits in 1166 CRISPR screens"/>
</dbReference>
<dbReference type="ChiTaRS" id="TM9SF2">
    <property type="organism name" value="human"/>
</dbReference>
<dbReference type="GeneWiki" id="TM9SF2"/>
<dbReference type="GenomeRNAi" id="9375"/>
<dbReference type="Pharos" id="Q99805">
    <property type="development level" value="Tbio"/>
</dbReference>
<dbReference type="PRO" id="PR:Q99805"/>
<dbReference type="Proteomes" id="UP000005640">
    <property type="component" value="Chromosome 13"/>
</dbReference>
<dbReference type="RNAct" id="Q99805">
    <property type="molecule type" value="protein"/>
</dbReference>
<dbReference type="Bgee" id="ENSG00000125304">
    <property type="expression patterns" value="Expressed in mucosa of sigmoid colon and 215 other cell types or tissues"/>
</dbReference>
<dbReference type="ExpressionAtlas" id="Q99805">
    <property type="expression patterns" value="baseline and differential"/>
</dbReference>
<dbReference type="GO" id="GO:0005768">
    <property type="term" value="C:endosome"/>
    <property type="evidence" value="ECO:0000304"/>
    <property type="project" value="ProtInc"/>
</dbReference>
<dbReference type="GO" id="GO:0010008">
    <property type="term" value="C:endosome membrane"/>
    <property type="evidence" value="ECO:0007669"/>
    <property type="project" value="UniProtKB-SubCell"/>
</dbReference>
<dbReference type="GO" id="GO:0070062">
    <property type="term" value="C:extracellular exosome"/>
    <property type="evidence" value="ECO:0007005"/>
    <property type="project" value="UniProtKB"/>
</dbReference>
<dbReference type="GO" id="GO:0005794">
    <property type="term" value="C:Golgi apparatus"/>
    <property type="evidence" value="ECO:0000314"/>
    <property type="project" value="UniProtKB"/>
</dbReference>
<dbReference type="GO" id="GO:0016020">
    <property type="term" value="C:membrane"/>
    <property type="evidence" value="ECO:0000318"/>
    <property type="project" value="GO_Central"/>
</dbReference>
<dbReference type="GO" id="GO:0005815">
    <property type="term" value="C:microtubule organizing center"/>
    <property type="evidence" value="ECO:0007669"/>
    <property type="project" value="UniProtKB-SubCell"/>
</dbReference>
<dbReference type="GO" id="GO:0005886">
    <property type="term" value="C:plasma membrane"/>
    <property type="evidence" value="ECO:0000304"/>
    <property type="project" value="ProtInc"/>
</dbReference>
<dbReference type="GO" id="GO:0006672">
    <property type="term" value="P:ceramide metabolic process"/>
    <property type="evidence" value="ECO:0000315"/>
    <property type="project" value="UniProtKB"/>
</dbReference>
<dbReference type="GO" id="GO:0006688">
    <property type="term" value="P:glycosphingolipid biosynthetic process"/>
    <property type="evidence" value="ECO:0000315"/>
    <property type="project" value="UniProtKB"/>
</dbReference>
<dbReference type="GO" id="GO:0072657">
    <property type="term" value="P:protein localization to membrane"/>
    <property type="evidence" value="ECO:0000318"/>
    <property type="project" value="GO_Central"/>
</dbReference>
<dbReference type="GO" id="GO:0010908">
    <property type="term" value="P:regulation of heparan sulfate proteoglycan biosynthetic process"/>
    <property type="evidence" value="ECO:0000315"/>
    <property type="project" value="UniProtKB"/>
</dbReference>
<dbReference type="InterPro" id="IPR004240">
    <property type="entry name" value="EMP70"/>
</dbReference>
<dbReference type="PANTHER" id="PTHR10766:SF111">
    <property type="entry name" value="TRANSMEMBRANE 9 SUPERFAMILY MEMBER 2"/>
    <property type="match status" value="1"/>
</dbReference>
<dbReference type="PANTHER" id="PTHR10766">
    <property type="entry name" value="TRANSMEMBRANE 9 SUPERFAMILY PROTEIN"/>
    <property type="match status" value="1"/>
</dbReference>
<dbReference type="Pfam" id="PF02990">
    <property type="entry name" value="EMP70"/>
    <property type="match status" value="1"/>
</dbReference>
<protein>
    <recommendedName>
        <fullName>Transmembrane 9 superfamily member 2</fullName>
    </recommendedName>
    <alternativeName>
        <fullName>p76</fullName>
    </alternativeName>
</protein>
<organism>
    <name type="scientific">Homo sapiens</name>
    <name type="common">Human</name>
    <dbReference type="NCBI Taxonomy" id="9606"/>
    <lineage>
        <taxon>Eukaryota</taxon>
        <taxon>Metazoa</taxon>
        <taxon>Chordata</taxon>
        <taxon>Craniata</taxon>
        <taxon>Vertebrata</taxon>
        <taxon>Euteleostomi</taxon>
        <taxon>Mammalia</taxon>
        <taxon>Eutheria</taxon>
        <taxon>Euarchontoglires</taxon>
        <taxon>Primates</taxon>
        <taxon>Haplorrhini</taxon>
        <taxon>Catarrhini</taxon>
        <taxon>Hominidae</taxon>
        <taxon>Homo</taxon>
    </lineage>
</organism>
<reference key="1">
    <citation type="journal article" date="1998" name="Gene">
        <title>Characterization of a 76 kDa endosomal, multispanning membrane protein that is highly conserved throughout evolution.</title>
        <authorList>
            <person name="Schimmoeller F."/>
            <person name="Diaz E."/>
            <person name="Muehlbauer B."/>
            <person name="Pfeffer S.R."/>
        </authorList>
    </citation>
    <scope>NUCLEOTIDE SEQUENCE [MRNA]</scope>
    <scope>FUNCTION</scope>
    <scope>SUBCELLULAR LOCATION</scope>
    <scope>TISSUE SPECIFICITY</scope>
</reference>
<reference key="2">
    <citation type="journal article" date="2004" name="Nat. Genet.">
        <title>Complete sequencing and characterization of 21,243 full-length human cDNAs.</title>
        <authorList>
            <person name="Ota T."/>
            <person name="Suzuki Y."/>
            <person name="Nishikawa T."/>
            <person name="Otsuki T."/>
            <person name="Sugiyama T."/>
            <person name="Irie R."/>
            <person name="Wakamatsu A."/>
            <person name="Hayashi K."/>
            <person name="Sato H."/>
            <person name="Nagai K."/>
            <person name="Kimura K."/>
            <person name="Makita H."/>
            <person name="Sekine M."/>
            <person name="Obayashi M."/>
            <person name="Nishi T."/>
            <person name="Shibahara T."/>
            <person name="Tanaka T."/>
            <person name="Ishii S."/>
            <person name="Yamamoto J."/>
            <person name="Saito K."/>
            <person name="Kawai Y."/>
            <person name="Isono Y."/>
            <person name="Nakamura Y."/>
            <person name="Nagahari K."/>
            <person name="Murakami K."/>
            <person name="Yasuda T."/>
            <person name="Iwayanagi T."/>
            <person name="Wagatsuma M."/>
            <person name="Shiratori A."/>
            <person name="Sudo H."/>
            <person name="Hosoiri T."/>
            <person name="Kaku Y."/>
            <person name="Kodaira H."/>
            <person name="Kondo H."/>
            <person name="Sugawara M."/>
            <person name="Takahashi M."/>
            <person name="Kanda K."/>
            <person name="Yokoi T."/>
            <person name="Furuya T."/>
            <person name="Kikkawa E."/>
            <person name="Omura Y."/>
            <person name="Abe K."/>
            <person name="Kamihara K."/>
            <person name="Katsuta N."/>
            <person name="Sato K."/>
            <person name="Tanikawa M."/>
            <person name="Yamazaki M."/>
            <person name="Ninomiya K."/>
            <person name="Ishibashi T."/>
            <person name="Yamashita H."/>
            <person name="Murakawa K."/>
            <person name="Fujimori K."/>
            <person name="Tanai H."/>
            <person name="Kimata M."/>
            <person name="Watanabe M."/>
            <person name="Hiraoka S."/>
            <person name="Chiba Y."/>
            <person name="Ishida S."/>
            <person name="Ono Y."/>
            <person name="Takiguchi S."/>
            <person name="Watanabe S."/>
            <person name="Yosida M."/>
            <person name="Hotuta T."/>
            <person name="Kusano J."/>
            <person name="Kanehori K."/>
            <person name="Takahashi-Fujii A."/>
            <person name="Hara H."/>
            <person name="Tanase T.-O."/>
            <person name="Nomura Y."/>
            <person name="Togiya S."/>
            <person name="Komai F."/>
            <person name="Hara R."/>
            <person name="Takeuchi K."/>
            <person name="Arita M."/>
            <person name="Imose N."/>
            <person name="Musashino K."/>
            <person name="Yuuki H."/>
            <person name="Oshima A."/>
            <person name="Sasaki N."/>
            <person name="Aotsuka S."/>
            <person name="Yoshikawa Y."/>
            <person name="Matsunawa H."/>
            <person name="Ichihara T."/>
            <person name="Shiohata N."/>
            <person name="Sano S."/>
            <person name="Moriya S."/>
            <person name="Momiyama H."/>
            <person name="Satoh N."/>
            <person name="Takami S."/>
            <person name="Terashima Y."/>
            <person name="Suzuki O."/>
            <person name="Nakagawa S."/>
            <person name="Senoh A."/>
            <person name="Mizoguchi H."/>
            <person name="Goto Y."/>
            <person name="Shimizu F."/>
            <person name="Wakebe H."/>
            <person name="Hishigaki H."/>
            <person name="Watanabe T."/>
            <person name="Sugiyama A."/>
            <person name="Takemoto M."/>
            <person name="Kawakami B."/>
            <person name="Yamazaki M."/>
            <person name="Watanabe K."/>
            <person name="Kumagai A."/>
            <person name="Itakura S."/>
            <person name="Fukuzumi Y."/>
            <person name="Fujimori Y."/>
            <person name="Komiyama M."/>
            <person name="Tashiro H."/>
            <person name="Tanigami A."/>
            <person name="Fujiwara T."/>
            <person name="Ono T."/>
            <person name="Yamada K."/>
            <person name="Fujii Y."/>
            <person name="Ozaki K."/>
            <person name="Hirao M."/>
            <person name="Ohmori Y."/>
            <person name="Kawabata A."/>
            <person name="Hikiji T."/>
            <person name="Kobatake N."/>
            <person name="Inagaki H."/>
            <person name="Ikema Y."/>
            <person name="Okamoto S."/>
            <person name="Okitani R."/>
            <person name="Kawakami T."/>
            <person name="Noguchi S."/>
            <person name="Itoh T."/>
            <person name="Shigeta K."/>
            <person name="Senba T."/>
            <person name="Matsumura K."/>
            <person name="Nakajima Y."/>
            <person name="Mizuno T."/>
            <person name="Morinaga M."/>
            <person name="Sasaki M."/>
            <person name="Togashi T."/>
            <person name="Oyama M."/>
            <person name="Hata H."/>
            <person name="Watanabe M."/>
            <person name="Komatsu T."/>
            <person name="Mizushima-Sugano J."/>
            <person name="Satoh T."/>
            <person name="Shirai Y."/>
            <person name="Takahashi Y."/>
            <person name="Nakagawa K."/>
            <person name="Okumura K."/>
            <person name="Nagase T."/>
            <person name="Nomura N."/>
            <person name="Kikuchi H."/>
            <person name="Masuho Y."/>
            <person name="Yamashita R."/>
            <person name="Nakai K."/>
            <person name="Yada T."/>
            <person name="Nakamura Y."/>
            <person name="Ohara O."/>
            <person name="Isogai T."/>
            <person name="Sugano S."/>
        </authorList>
    </citation>
    <scope>NUCLEOTIDE SEQUENCE [LARGE SCALE MRNA]</scope>
    <source>
        <tissue>Brain</tissue>
    </source>
</reference>
<reference key="3">
    <citation type="journal article" date="2004" name="Nature">
        <title>The DNA sequence and analysis of human chromosome 13.</title>
        <authorList>
            <person name="Dunham A."/>
            <person name="Matthews L.H."/>
            <person name="Burton J."/>
            <person name="Ashurst J.L."/>
            <person name="Howe K.L."/>
            <person name="Ashcroft K.J."/>
            <person name="Beare D.M."/>
            <person name="Burford D.C."/>
            <person name="Hunt S.E."/>
            <person name="Griffiths-Jones S."/>
            <person name="Jones M.C."/>
            <person name="Keenan S.J."/>
            <person name="Oliver K."/>
            <person name="Scott C.E."/>
            <person name="Ainscough R."/>
            <person name="Almeida J.P."/>
            <person name="Ambrose K.D."/>
            <person name="Andrews D.T."/>
            <person name="Ashwell R.I.S."/>
            <person name="Babbage A.K."/>
            <person name="Bagguley C.L."/>
            <person name="Bailey J."/>
            <person name="Bannerjee R."/>
            <person name="Barlow K.F."/>
            <person name="Bates K."/>
            <person name="Beasley H."/>
            <person name="Bird C.P."/>
            <person name="Bray-Allen S."/>
            <person name="Brown A.J."/>
            <person name="Brown J.Y."/>
            <person name="Burrill W."/>
            <person name="Carder C."/>
            <person name="Carter N.P."/>
            <person name="Chapman J.C."/>
            <person name="Clamp M.E."/>
            <person name="Clark S.Y."/>
            <person name="Clarke G."/>
            <person name="Clee C.M."/>
            <person name="Clegg S.C."/>
            <person name="Cobley V."/>
            <person name="Collins J.E."/>
            <person name="Corby N."/>
            <person name="Coville G.J."/>
            <person name="Deloukas P."/>
            <person name="Dhami P."/>
            <person name="Dunham I."/>
            <person name="Dunn M."/>
            <person name="Earthrowl M.E."/>
            <person name="Ellington A.G."/>
            <person name="Faulkner L."/>
            <person name="Frankish A.G."/>
            <person name="Frankland J."/>
            <person name="French L."/>
            <person name="Garner P."/>
            <person name="Garnett J."/>
            <person name="Gilbert J.G.R."/>
            <person name="Gilson C.J."/>
            <person name="Ghori J."/>
            <person name="Grafham D.V."/>
            <person name="Gribble S.M."/>
            <person name="Griffiths C."/>
            <person name="Hall R.E."/>
            <person name="Hammond S."/>
            <person name="Harley J.L."/>
            <person name="Hart E.A."/>
            <person name="Heath P.D."/>
            <person name="Howden P.J."/>
            <person name="Huckle E.J."/>
            <person name="Hunt P.J."/>
            <person name="Hunt A.R."/>
            <person name="Johnson C."/>
            <person name="Johnson D."/>
            <person name="Kay M."/>
            <person name="Kimberley A.M."/>
            <person name="King A."/>
            <person name="Laird G.K."/>
            <person name="Langford C.J."/>
            <person name="Lawlor S."/>
            <person name="Leongamornlert D.A."/>
            <person name="Lloyd D.M."/>
            <person name="Lloyd C."/>
            <person name="Loveland J.E."/>
            <person name="Lovell J."/>
            <person name="Martin S."/>
            <person name="Mashreghi-Mohammadi M."/>
            <person name="McLaren S.J."/>
            <person name="McMurray A."/>
            <person name="Milne S."/>
            <person name="Moore M.J.F."/>
            <person name="Nickerson T."/>
            <person name="Palmer S.A."/>
            <person name="Pearce A.V."/>
            <person name="Peck A.I."/>
            <person name="Pelan S."/>
            <person name="Phillimore B."/>
            <person name="Porter K.M."/>
            <person name="Rice C.M."/>
            <person name="Searle S."/>
            <person name="Sehra H.K."/>
            <person name="Shownkeen R."/>
            <person name="Skuce C.D."/>
            <person name="Smith M."/>
            <person name="Steward C.A."/>
            <person name="Sycamore N."/>
            <person name="Tester J."/>
            <person name="Thomas D.W."/>
            <person name="Tracey A."/>
            <person name="Tromans A."/>
            <person name="Tubby B."/>
            <person name="Wall M."/>
            <person name="Wallis J.M."/>
            <person name="West A.P."/>
            <person name="Whitehead S.L."/>
            <person name="Willey D.L."/>
            <person name="Wilming L."/>
            <person name="Wray P.W."/>
            <person name="Wright M.W."/>
            <person name="Young L."/>
            <person name="Coulson A."/>
            <person name="Durbin R.M."/>
            <person name="Hubbard T."/>
            <person name="Sulston J.E."/>
            <person name="Beck S."/>
            <person name="Bentley D.R."/>
            <person name="Rogers J."/>
            <person name="Ross M.T."/>
        </authorList>
    </citation>
    <scope>NUCLEOTIDE SEQUENCE [LARGE SCALE GENOMIC DNA]</scope>
</reference>
<reference key="4">
    <citation type="journal article" date="2004" name="Genome Res.">
        <title>The status, quality, and expansion of the NIH full-length cDNA project: the Mammalian Gene Collection (MGC).</title>
        <authorList>
            <consortium name="The MGC Project Team"/>
        </authorList>
    </citation>
    <scope>NUCLEOTIDE SEQUENCE [LARGE SCALE MRNA]</scope>
    <source>
        <tissue>Brain</tissue>
        <tissue>Colon</tissue>
    </source>
</reference>
<reference key="5">
    <citation type="journal article" date="2011" name="BMC Syst. Biol.">
        <title>Initial characterization of the human central proteome.</title>
        <authorList>
            <person name="Burkard T.R."/>
            <person name="Planyavsky M."/>
            <person name="Kaupe I."/>
            <person name="Breitwieser F.P."/>
            <person name="Buerckstuemmer T."/>
            <person name="Bennett K.L."/>
            <person name="Superti-Furga G."/>
            <person name="Colinge J."/>
        </authorList>
    </citation>
    <scope>IDENTIFICATION BY MASS SPECTROMETRY [LARGE SCALE ANALYSIS]</scope>
</reference>
<sequence>MSARLPVLSPPRWPRLLLLSLLLLGAVPGPRRSGAFYLPGLAPVNFCDEEKKSDECKAEIELFVNRLDSVESVLPYEYTAFDFCQASEGKRPSENLGQVLFGERIEPSPYKFTFNKKETCKLVCTKTYHTEKAEDKQKLEFLKKSMLLNYQHHWIVDNMPVTWCYDVEDGQRFCNPGFPIGCYITDKGHAKDACVISSDFHERDTFYIFNHVDIKIYYHVVETGSMGARLVAAKLEPKSFKHTHIDKPDCSGPPMDISNKASGEIKIAYTYSVSFEEDDKIRWASRWDYILESMPHTHIQWFSIMNSLVIVLFLSGMVAMIMLRTLHKDIARYNQMDSTEDAQEEFGWKLVHGDIFRPPRKGMLLSVFLGSGTQILIMTFVTLFFACLGFLSPANRGALMTCAVVLWVLLGTPAGYVAARFYKSFGGEKWKTNVLLTSFLCPGIVFADFFIMNLILWGEGSSAAIPFGTLVAILALWFCISVPLTFIGAYFGFKKNAIEHPVRTNQIPRQIPEQSFYTKPLPGIIMGGILPFGCIFIQLFFILNSIWSHQMYYMFGFLFLVFIILVITCSEATILLCYFHLCAEDYHWQWRSFLTSGFTAVYFLIYAVHYFFSKLQITGTASTILYFGYTMIMVLIFFLFTGTIGFFACFWFVTKIYSVVKVD</sequence>
<keyword id="KW-0963">Cytoplasm</keyword>
<keyword id="KW-0206">Cytoskeleton</keyword>
<keyword id="KW-0967">Endosome</keyword>
<keyword id="KW-0333">Golgi apparatus</keyword>
<keyword id="KW-0472">Membrane</keyword>
<keyword id="KW-1267">Proteomics identification</keyword>
<keyword id="KW-1185">Reference proteome</keyword>
<keyword id="KW-0732">Signal</keyword>
<keyword id="KW-0812">Transmembrane</keyword>
<keyword id="KW-1133">Transmembrane helix</keyword>
<feature type="signal peptide" evidence="2">
    <location>
        <begin position="1"/>
        <end position="28"/>
    </location>
</feature>
<feature type="chain" id="PRO_0000034365" description="Transmembrane 9 superfamily member 2">
    <location>
        <begin position="29"/>
        <end position="663"/>
    </location>
</feature>
<feature type="topological domain" description="Lumenal" evidence="2">
    <location>
        <begin position="29"/>
        <end position="300"/>
    </location>
</feature>
<feature type="transmembrane region" description="Helical" evidence="2">
    <location>
        <begin position="301"/>
        <end position="321"/>
    </location>
</feature>
<feature type="topological domain" description="Cytoplasmic" evidence="2">
    <location>
        <begin position="322"/>
        <end position="374"/>
    </location>
</feature>
<feature type="transmembrane region" description="Helical" evidence="2">
    <location>
        <begin position="375"/>
        <end position="395"/>
    </location>
</feature>
<feature type="topological domain" description="Lumenal" evidence="2">
    <location>
        <begin position="396"/>
        <end position="398"/>
    </location>
</feature>
<feature type="transmembrane region" description="Helical" evidence="2">
    <location>
        <begin position="399"/>
        <end position="419"/>
    </location>
</feature>
<feature type="topological domain" description="Cytoplasmic" evidence="2">
    <location>
        <begin position="420"/>
        <end position="437"/>
    </location>
</feature>
<feature type="transmembrane region" description="Helical" evidence="2">
    <location>
        <begin position="438"/>
        <end position="458"/>
    </location>
</feature>
<feature type="topological domain" description="Lumenal" evidence="2">
    <location>
        <begin position="459"/>
        <end position="466"/>
    </location>
</feature>
<feature type="transmembrane region" description="Helical" evidence="2">
    <location>
        <begin position="467"/>
        <end position="487"/>
    </location>
</feature>
<feature type="topological domain" description="Cytoplasmic" evidence="2">
    <location>
        <begin position="488"/>
        <end position="522"/>
    </location>
</feature>
<feature type="transmembrane region" description="Helical" evidence="2">
    <location>
        <begin position="523"/>
        <end position="543"/>
    </location>
</feature>
<feature type="topological domain" description="Lumenal" evidence="2">
    <location>
        <begin position="544"/>
        <end position="554"/>
    </location>
</feature>
<feature type="transmembrane region" description="Helical" evidence="2">
    <location>
        <begin position="555"/>
        <end position="575"/>
    </location>
</feature>
<feature type="topological domain" description="Cytoplasmic" evidence="2">
    <location>
        <begin position="576"/>
        <end position="591"/>
    </location>
</feature>
<feature type="transmembrane region" description="Helical" evidence="2">
    <location>
        <begin position="592"/>
        <end position="612"/>
    </location>
</feature>
<feature type="topological domain" description="Lumenal" evidence="2">
    <location>
        <begin position="613"/>
        <end position="631"/>
    </location>
</feature>
<feature type="transmembrane region" description="Helical" evidence="2">
    <location>
        <begin position="632"/>
        <end position="652"/>
    </location>
</feature>
<feature type="topological domain" description="Cytoplasmic" evidence="2">
    <location>
        <begin position="653"/>
        <end position="663"/>
    </location>
</feature>
<name>TM9S2_HUMAN</name>
<comment type="function">
    <text evidence="5">In the intracellular compartments, may function as a channel or small molecule transporter.</text>
</comment>
<comment type="subcellular location">
    <subcellularLocation>
        <location evidence="5">Endosome membrane</location>
        <topology evidence="2">Multi-pass membrane protein</topology>
    </subcellularLocation>
    <subcellularLocation>
        <location evidence="1">Golgi outpost</location>
    </subcellularLocation>
    <subcellularLocation>
        <location evidence="1">Cytoplasm</location>
        <location evidence="1">Cytoskeleton</location>
        <location evidence="1">Microtubule organizing center</location>
    </subcellularLocation>
    <text evidence="1">Localizes to the postsynaptic Golgi apparatus region, also named Golgi outpost, which shapes dendrite morphology by functioning as sites of acentrosomal microtubule nucleation.</text>
</comment>
<comment type="tissue specificity">
    <text evidence="3">Ubiquitously expressed. Especially abundant in pancreas, highly expressed in kidney, lower levels in heart, brain, skeletal muscle and placenta. Lowest expression in lung and liver.</text>
</comment>
<comment type="similarity">
    <text evidence="4">Belongs to the nonaspanin (TM9SF) (TC 9.A.2) family.</text>
</comment>
<proteinExistence type="evidence at protein level"/>
<accession>Q99805</accession>
<accession>A8K399</accession>
<accession>Q2TAY5</accession>
<evidence type="ECO:0000250" key="1">
    <source>
        <dbReference type="UniProtKB" id="Q66HG5"/>
    </source>
</evidence>
<evidence type="ECO:0000255" key="2"/>
<evidence type="ECO:0000269" key="3">
    <source>
    </source>
</evidence>
<evidence type="ECO:0000305" key="4"/>
<evidence type="ECO:0000305" key="5">
    <source>
    </source>
</evidence>